<gene>
    <name type="primary">mnhF2</name>
    <name type="synonym">mrpF2</name>
    <name type="ordered locus">SaurJH9_0650</name>
</gene>
<organism>
    <name type="scientific">Staphylococcus aureus (strain JH9)</name>
    <dbReference type="NCBI Taxonomy" id="359786"/>
    <lineage>
        <taxon>Bacteria</taxon>
        <taxon>Bacillati</taxon>
        <taxon>Bacillota</taxon>
        <taxon>Bacilli</taxon>
        <taxon>Bacillales</taxon>
        <taxon>Staphylococcaceae</taxon>
        <taxon>Staphylococcus</taxon>
    </lineage>
</organism>
<name>MNHF2_STAA9</name>
<protein>
    <recommendedName>
        <fullName>Putative antiporter subunit mnhF2</fullName>
    </recommendedName>
    <alternativeName>
        <fullName>Mrp complex subunit F2</fullName>
    </alternativeName>
    <alternativeName>
        <fullName>Putative NADH-ubiquinone oxidoreductase subunit mnhF2</fullName>
    </alternativeName>
</protein>
<evidence type="ECO:0000250" key="1"/>
<evidence type="ECO:0000255" key="2"/>
<evidence type="ECO:0000305" key="3"/>
<proteinExistence type="inferred from homology"/>
<accession>A5IQI0</accession>
<feature type="chain" id="PRO_0000372194" description="Putative antiporter subunit mnhF2">
    <location>
        <begin position="1"/>
        <end position="100"/>
    </location>
</feature>
<feature type="transmembrane region" description="Helical" evidence="2">
    <location>
        <begin position="5"/>
        <end position="25"/>
    </location>
</feature>
<feature type="transmembrane region" description="Helical" evidence="2">
    <location>
        <begin position="38"/>
        <end position="60"/>
    </location>
</feature>
<feature type="transmembrane region" description="Helical" evidence="2">
    <location>
        <begin position="70"/>
        <end position="92"/>
    </location>
</feature>
<reference key="1">
    <citation type="submission" date="2007-05" db="EMBL/GenBank/DDBJ databases">
        <title>Complete sequence of chromosome of Staphylococcus aureus subsp. aureus JH9.</title>
        <authorList>
            <consortium name="US DOE Joint Genome Institute"/>
            <person name="Copeland A."/>
            <person name="Lucas S."/>
            <person name="Lapidus A."/>
            <person name="Barry K."/>
            <person name="Detter J.C."/>
            <person name="Glavina del Rio T."/>
            <person name="Hammon N."/>
            <person name="Israni S."/>
            <person name="Pitluck S."/>
            <person name="Chain P."/>
            <person name="Malfatti S."/>
            <person name="Shin M."/>
            <person name="Vergez L."/>
            <person name="Schmutz J."/>
            <person name="Larimer F."/>
            <person name="Land M."/>
            <person name="Hauser L."/>
            <person name="Kyrpides N."/>
            <person name="Kim E."/>
            <person name="Tomasz A."/>
            <person name="Richardson P."/>
        </authorList>
    </citation>
    <scope>NUCLEOTIDE SEQUENCE [LARGE SCALE GENOMIC DNA]</scope>
    <source>
        <strain>JH9</strain>
    </source>
</reference>
<sequence>MIQTITHIMIISSLIIFGIALIICLFRLIKGPTTADRVVTFDTTSAVVMSIVGVLSVLMGTVSFLDSIMLIAIISFVSSVSISRFIGGGHVFNGNNKRNL</sequence>
<dbReference type="EMBL" id="CP000703">
    <property type="protein sequence ID" value="ABQ48453.1"/>
    <property type="molecule type" value="Genomic_DNA"/>
</dbReference>
<dbReference type="RefSeq" id="WP_000616642.1">
    <property type="nucleotide sequence ID" value="NC_009487.1"/>
</dbReference>
<dbReference type="SMR" id="A5IQI0"/>
<dbReference type="KEGG" id="saj:SaurJH9_0650"/>
<dbReference type="HOGENOM" id="CLU_125825_1_3_9"/>
<dbReference type="GO" id="GO:0005886">
    <property type="term" value="C:plasma membrane"/>
    <property type="evidence" value="ECO:0007669"/>
    <property type="project" value="UniProtKB-SubCell"/>
</dbReference>
<dbReference type="GO" id="GO:0015385">
    <property type="term" value="F:sodium:proton antiporter activity"/>
    <property type="evidence" value="ECO:0007669"/>
    <property type="project" value="TreeGrafter"/>
</dbReference>
<dbReference type="InterPro" id="IPR007208">
    <property type="entry name" value="MrpF/PhaF-like"/>
</dbReference>
<dbReference type="NCBIfam" id="NF009300">
    <property type="entry name" value="PRK12657.1"/>
    <property type="match status" value="1"/>
</dbReference>
<dbReference type="PANTHER" id="PTHR34702">
    <property type="entry name" value="NA(+)/H(+) ANTIPORTER SUBUNIT F1"/>
    <property type="match status" value="1"/>
</dbReference>
<dbReference type="PANTHER" id="PTHR34702:SF1">
    <property type="entry name" value="NA(+)_H(+) ANTIPORTER SUBUNIT F"/>
    <property type="match status" value="1"/>
</dbReference>
<dbReference type="Pfam" id="PF04066">
    <property type="entry name" value="MrpF_PhaF"/>
    <property type="match status" value="1"/>
</dbReference>
<dbReference type="PIRSF" id="PIRSF028784">
    <property type="entry name" value="MrpF"/>
    <property type="match status" value="1"/>
</dbReference>
<keyword id="KW-0050">Antiport</keyword>
<keyword id="KW-1003">Cell membrane</keyword>
<keyword id="KW-0406">Ion transport</keyword>
<keyword id="KW-0472">Membrane</keyword>
<keyword id="KW-0812">Transmembrane</keyword>
<keyword id="KW-1133">Transmembrane helix</keyword>
<keyword id="KW-0813">Transport</keyword>
<comment type="subunit">
    <text evidence="1">May form a heterooligomeric complex that consists of seven subunits: mnhA2, mnhB2, mnhC2, mnhD2, mnhE2, mnhF2 and mnhG2.</text>
</comment>
<comment type="subcellular location">
    <subcellularLocation>
        <location evidence="3">Cell membrane</location>
        <topology evidence="3">Multi-pass membrane protein</topology>
    </subcellularLocation>
</comment>
<comment type="similarity">
    <text evidence="3">Belongs to the CPA3 antiporters (TC 2.A.63) subunit F family.</text>
</comment>